<keyword id="KW-0186">Copper</keyword>
<keyword id="KW-0249">Electron transport</keyword>
<keyword id="KW-0460">Magnesium</keyword>
<keyword id="KW-0472">Membrane</keyword>
<keyword id="KW-0479">Metal-binding</keyword>
<keyword id="KW-0496">Mitochondrion</keyword>
<keyword id="KW-0999">Mitochondrion inner membrane</keyword>
<keyword id="KW-0597">Phosphoprotein</keyword>
<keyword id="KW-0679">Respiratory chain</keyword>
<keyword id="KW-1278">Translocase</keyword>
<keyword id="KW-0812">Transmembrane</keyword>
<keyword id="KW-1133">Transmembrane helix</keyword>
<keyword id="KW-0813">Transport</keyword>
<protein>
    <recommendedName>
        <fullName>Cytochrome c oxidase subunit 2</fullName>
        <ecNumber>7.1.1.9</ecNumber>
    </recommendedName>
    <alternativeName>
        <fullName>Cytochrome c oxidase polypeptide II</fullName>
    </alternativeName>
</protein>
<feature type="chain" id="PRO_0000183711" description="Cytochrome c oxidase subunit 2">
    <location>
        <begin position="1"/>
        <end position="227"/>
    </location>
</feature>
<feature type="topological domain" description="Mitochondrial intermembrane" evidence="4">
    <location>
        <begin position="1"/>
        <end position="14"/>
    </location>
</feature>
<feature type="transmembrane region" description="Helical; Name=I" evidence="4">
    <location>
        <begin position="15"/>
        <end position="45"/>
    </location>
</feature>
<feature type="topological domain" description="Mitochondrial matrix" evidence="4">
    <location>
        <begin position="46"/>
        <end position="59"/>
    </location>
</feature>
<feature type="transmembrane region" description="Helical; Name=II" evidence="4">
    <location>
        <begin position="60"/>
        <end position="87"/>
    </location>
</feature>
<feature type="topological domain" description="Mitochondrial intermembrane" evidence="4">
    <location>
        <begin position="88"/>
        <end position="227"/>
    </location>
</feature>
<feature type="binding site" evidence="4">
    <location>
        <position position="161"/>
    </location>
    <ligand>
        <name>Cu cation</name>
        <dbReference type="ChEBI" id="CHEBI:23378"/>
        <label>A1</label>
    </ligand>
</feature>
<feature type="binding site" evidence="4">
    <location>
        <position position="196"/>
    </location>
    <ligand>
        <name>Cu cation</name>
        <dbReference type="ChEBI" id="CHEBI:23378"/>
        <label>A1</label>
    </ligand>
</feature>
<feature type="binding site" evidence="4">
    <location>
        <position position="196"/>
    </location>
    <ligand>
        <name>Cu cation</name>
        <dbReference type="ChEBI" id="CHEBI:23378"/>
        <label>A2</label>
    </ligand>
</feature>
<feature type="binding site" evidence="4">
    <location>
        <position position="198"/>
    </location>
    <ligand>
        <name>Cu cation</name>
        <dbReference type="ChEBI" id="CHEBI:23378"/>
        <label>A2</label>
    </ligand>
</feature>
<feature type="binding site" evidence="4">
    <location>
        <position position="198"/>
    </location>
    <ligand>
        <name>Mg(2+)</name>
        <dbReference type="ChEBI" id="CHEBI:18420"/>
        <note>ligand shared with MT-CO1</note>
    </ligand>
</feature>
<feature type="binding site" evidence="4">
    <location>
        <position position="200"/>
    </location>
    <ligand>
        <name>Cu cation</name>
        <dbReference type="ChEBI" id="CHEBI:23378"/>
        <label>A1</label>
    </ligand>
</feature>
<feature type="binding site" evidence="4">
    <location>
        <position position="200"/>
    </location>
    <ligand>
        <name>Cu cation</name>
        <dbReference type="ChEBI" id="CHEBI:23378"/>
        <label>A2</label>
    </ligand>
</feature>
<feature type="binding site" evidence="4">
    <location>
        <position position="204"/>
    </location>
    <ligand>
        <name>Cu cation</name>
        <dbReference type="ChEBI" id="CHEBI:23378"/>
        <label>A2</label>
    </ligand>
</feature>
<feature type="binding site" evidence="4">
    <location>
        <position position="207"/>
    </location>
    <ligand>
        <name>Cu cation</name>
        <dbReference type="ChEBI" id="CHEBI:23378"/>
        <label>A1</label>
    </ligand>
</feature>
<feature type="modified residue" description="Phosphotyrosine" evidence="2">
    <location>
        <position position="218"/>
    </location>
</feature>
<comment type="function">
    <text evidence="3">Component of the cytochrome c oxidase, the last enzyme in the mitochondrial electron transport chain which drives oxidative phosphorylation. The respiratory chain contains 3 multisubunit complexes succinate dehydrogenase (complex II, CII), ubiquinol-cytochrome c oxidoreductase (cytochrome b-c1 complex, complex III, CIII) and cytochrome c oxidase (complex IV, CIV), that cooperate to transfer electrons derived from NADH and succinate to molecular oxygen, creating an electrochemical gradient over the inner membrane that drives transmembrane transport and the ATP synthase. Cytochrome c oxidase is the component of the respiratory chain that catalyzes the reduction of oxygen to water. Electrons originating from reduced cytochrome c in the intermembrane space (IMS) are transferred via the dinuclear copper A center (CU(A)) of subunit 2 and heme A of subunit 1 to the active site in subunit 1, a binuclear center (BNC) formed by heme A3 and copper B (CU(B)). The BNC reduces molecular oxygen to 2 water molecules using 4 electrons from cytochrome c in the IMS and 4 protons from the mitochondrial matrix.</text>
</comment>
<comment type="catalytic activity">
    <reaction evidence="3">
        <text>4 Fe(II)-[cytochrome c] + O2 + 8 H(+)(in) = 4 Fe(III)-[cytochrome c] + 2 H2O + 4 H(+)(out)</text>
        <dbReference type="Rhea" id="RHEA:11436"/>
        <dbReference type="Rhea" id="RHEA-COMP:10350"/>
        <dbReference type="Rhea" id="RHEA-COMP:14399"/>
        <dbReference type="ChEBI" id="CHEBI:15377"/>
        <dbReference type="ChEBI" id="CHEBI:15378"/>
        <dbReference type="ChEBI" id="CHEBI:15379"/>
        <dbReference type="ChEBI" id="CHEBI:29033"/>
        <dbReference type="ChEBI" id="CHEBI:29034"/>
        <dbReference type="EC" id="7.1.1.9"/>
    </reaction>
    <physiologicalReaction direction="left-to-right" evidence="3">
        <dbReference type="Rhea" id="RHEA:11437"/>
    </physiologicalReaction>
</comment>
<comment type="cofactor">
    <cofactor evidence="4">
        <name>Cu cation</name>
        <dbReference type="ChEBI" id="CHEBI:23378"/>
    </cofactor>
    <text evidence="4">Binds a dinuclear copper A center per subunit.</text>
</comment>
<comment type="subunit">
    <text evidence="1 4">Component of the cytochrome c oxidase (complex IV, CIV), a multisubunit enzyme composed of 14 subunits. The complex is composed of a catalytic core of 3 subunits MT-CO1, MT-CO2 and MT-CO3, encoded in the mitochondrial DNA, and 11 supernumerary subunits COX4I, COX5A, COX5B, COX6A, COX6B, COX6C, COX7A, COX7B, COX7C, COX8 and NDUFA4, which are encoded in the nuclear genome. The complex exists as a monomer or a dimer and forms supercomplexes (SCs) in the inner mitochondrial membrane with NADH-ubiquinone oxidoreductase (complex I, CI) and ubiquinol-cytochrome c oxidoreductase (cytochrome b-c1 complex, complex III, CIII), resulting in different assemblies (supercomplex SCI(1)III(2)IV(1) and megacomplex MCI(2)III(2)IV(2)) (By similarity). Found in a complex with TMEM177, COA6, COX18, COX20, SCO1 and SCO2. Interacts with TMEM177 in a COX20-dependent manner. Interacts with COX20. Interacts with COX16 (By similarity).</text>
</comment>
<comment type="subcellular location">
    <subcellularLocation>
        <location evidence="4">Mitochondrion inner membrane</location>
        <topology evidence="4">Multi-pass membrane protein</topology>
    </subcellularLocation>
</comment>
<comment type="similarity">
    <text evidence="5">Belongs to the cytochrome c oxidase subunit 2 family.</text>
</comment>
<reference key="1">
    <citation type="journal article" date="1997" name="Syst. Biol.">
        <title>Molecular systematics of the Canidae.</title>
        <authorList>
            <person name="Wayne R.K."/>
            <person name="Geffen E."/>
            <person name="Girman D.J."/>
            <person name="Koepfli K.-P."/>
            <person name="Lau L.M."/>
            <person name="Marshall C.R."/>
        </authorList>
    </citation>
    <scope>NUCLEOTIDE SEQUENCE [GENOMIC DNA]</scope>
</reference>
<evidence type="ECO:0000250" key="1">
    <source>
        <dbReference type="UniProtKB" id="P00403"/>
    </source>
</evidence>
<evidence type="ECO:0000250" key="2">
    <source>
        <dbReference type="UniProtKB" id="P00406"/>
    </source>
</evidence>
<evidence type="ECO:0000250" key="3">
    <source>
        <dbReference type="UniProtKB" id="P00410"/>
    </source>
</evidence>
<evidence type="ECO:0000250" key="4">
    <source>
        <dbReference type="UniProtKB" id="P68530"/>
    </source>
</evidence>
<evidence type="ECO:0000305" key="5"/>
<accession>O47680</accession>
<proteinExistence type="inferred from homology"/>
<dbReference type="EC" id="7.1.1.9"/>
<dbReference type="EMBL" id="AF028229">
    <property type="protein sequence ID" value="AAC00122.1"/>
    <property type="molecule type" value="Genomic_DNA"/>
</dbReference>
<dbReference type="SMR" id="O47680"/>
<dbReference type="GO" id="GO:0005743">
    <property type="term" value="C:mitochondrial inner membrane"/>
    <property type="evidence" value="ECO:0007669"/>
    <property type="project" value="UniProtKB-SubCell"/>
</dbReference>
<dbReference type="GO" id="GO:0045277">
    <property type="term" value="C:respiratory chain complex IV"/>
    <property type="evidence" value="ECO:0000250"/>
    <property type="project" value="UniProtKB"/>
</dbReference>
<dbReference type="GO" id="GO:0005507">
    <property type="term" value="F:copper ion binding"/>
    <property type="evidence" value="ECO:0007669"/>
    <property type="project" value="InterPro"/>
</dbReference>
<dbReference type="GO" id="GO:0004129">
    <property type="term" value="F:cytochrome-c oxidase activity"/>
    <property type="evidence" value="ECO:0007669"/>
    <property type="project" value="UniProtKB-EC"/>
</dbReference>
<dbReference type="GO" id="GO:0042773">
    <property type="term" value="P:ATP synthesis coupled electron transport"/>
    <property type="evidence" value="ECO:0007669"/>
    <property type="project" value="TreeGrafter"/>
</dbReference>
<dbReference type="CDD" id="cd13912">
    <property type="entry name" value="CcO_II_C"/>
    <property type="match status" value="1"/>
</dbReference>
<dbReference type="FunFam" id="1.10.287.90:FF:000001">
    <property type="entry name" value="Cytochrome c oxidase subunit 2"/>
    <property type="match status" value="1"/>
</dbReference>
<dbReference type="FunFam" id="2.60.40.420:FF:000001">
    <property type="entry name" value="Cytochrome c oxidase subunit 2"/>
    <property type="match status" value="1"/>
</dbReference>
<dbReference type="Gene3D" id="1.10.287.90">
    <property type="match status" value="1"/>
</dbReference>
<dbReference type="Gene3D" id="2.60.40.420">
    <property type="entry name" value="Cupredoxins - blue copper proteins"/>
    <property type="match status" value="1"/>
</dbReference>
<dbReference type="InterPro" id="IPR045187">
    <property type="entry name" value="CcO_II"/>
</dbReference>
<dbReference type="InterPro" id="IPR002429">
    <property type="entry name" value="CcO_II-like_C"/>
</dbReference>
<dbReference type="InterPro" id="IPR034210">
    <property type="entry name" value="CcO_II_C"/>
</dbReference>
<dbReference type="InterPro" id="IPR001505">
    <property type="entry name" value="Copper_CuA"/>
</dbReference>
<dbReference type="InterPro" id="IPR008972">
    <property type="entry name" value="Cupredoxin"/>
</dbReference>
<dbReference type="InterPro" id="IPR014222">
    <property type="entry name" value="Cyt_c_oxidase_su2"/>
</dbReference>
<dbReference type="InterPro" id="IPR011759">
    <property type="entry name" value="Cyt_c_oxidase_su2_TM_dom"/>
</dbReference>
<dbReference type="InterPro" id="IPR036257">
    <property type="entry name" value="Cyt_c_oxidase_su2_TM_sf"/>
</dbReference>
<dbReference type="NCBIfam" id="TIGR02866">
    <property type="entry name" value="CoxB"/>
    <property type="match status" value="1"/>
</dbReference>
<dbReference type="PANTHER" id="PTHR22888:SF9">
    <property type="entry name" value="CYTOCHROME C OXIDASE SUBUNIT 2"/>
    <property type="match status" value="1"/>
</dbReference>
<dbReference type="PANTHER" id="PTHR22888">
    <property type="entry name" value="CYTOCHROME C OXIDASE, SUBUNIT II"/>
    <property type="match status" value="1"/>
</dbReference>
<dbReference type="Pfam" id="PF00116">
    <property type="entry name" value="COX2"/>
    <property type="match status" value="1"/>
</dbReference>
<dbReference type="Pfam" id="PF02790">
    <property type="entry name" value="COX2_TM"/>
    <property type="match status" value="1"/>
</dbReference>
<dbReference type="PRINTS" id="PR01166">
    <property type="entry name" value="CYCOXIDASEII"/>
</dbReference>
<dbReference type="SUPFAM" id="SSF49503">
    <property type="entry name" value="Cupredoxins"/>
    <property type="match status" value="1"/>
</dbReference>
<dbReference type="SUPFAM" id="SSF81464">
    <property type="entry name" value="Cytochrome c oxidase subunit II-like, transmembrane region"/>
    <property type="match status" value="1"/>
</dbReference>
<dbReference type="PROSITE" id="PS00078">
    <property type="entry name" value="COX2"/>
    <property type="match status" value="1"/>
</dbReference>
<dbReference type="PROSITE" id="PS50857">
    <property type="entry name" value="COX2_CUA"/>
    <property type="match status" value="1"/>
</dbReference>
<dbReference type="PROSITE" id="PS50999">
    <property type="entry name" value="COX2_TM"/>
    <property type="match status" value="1"/>
</dbReference>
<name>COX2_VULMA</name>
<gene>
    <name type="primary">MT-CO2</name>
    <name type="synonym">COII</name>
    <name type="synonym">COX2</name>
    <name type="synonym">COXII</name>
    <name type="synonym">MTCO2</name>
</gene>
<geneLocation type="mitochondrion"/>
<sequence length="227" mass="26062">MAYPFQLGLQDATSPIMEELLHFHDHTLMIVFLISSLVLYIITLMLTTKLTHTSTMDAQEVETVWTILPAIILILIALPSLRILYMMDEINNPSLTVKTMGHQWYWSYEYTDYEDLNFDSYMIPTQELKPGELRLLEVDNRVVLPMEMTVRMLISSEDVLHSWAVPSLGLKTDAIPGRLNQTTLMAMRPGLYYGQCSEICGSNHSFMPIVLEMVPLSYFETWSALMV</sequence>
<organism>
    <name type="scientific">Vulpes macrotis</name>
    <name type="common">Kit fox</name>
    <dbReference type="NCBI Taxonomy" id="9630"/>
    <lineage>
        <taxon>Eukaryota</taxon>
        <taxon>Metazoa</taxon>
        <taxon>Chordata</taxon>
        <taxon>Craniata</taxon>
        <taxon>Vertebrata</taxon>
        <taxon>Euteleostomi</taxon>
        <taxon>Mammalia</taxon>
        <taxon>Eutheria</taxon>
        <taxon>Laurasiatheria</taxon>
        <taxon>Carnivora</taxon>
        <taxon>Caniformia</taxon>
        <taxon>Canidae</taxon>
        <taxon>Vulpes</taxon>
    </lineage>
</organism>